<organism>
    <name type="scientific">Burkholderia lata (strain ATCC 17760 / DSM 23089 / LMG 22485 / NCIMB 9086 / R18194 / 383)</name>
    <dbReference type="NCBI Taxonomy" id="482957"/>
    <lineage>
        <taxon>Bacteria</taxon>
        <taxon>Pseudomonadati</taxon>
        <taxon>Pseudomonadota</taxon>
        <taxon>Betaproteobacteria</taxon>
        <taxon>Burkholderiales</taxon>
        <taxon>Burkholderiaceae</taxon>
        <taxon>Burkholderia</taxon>
        <taxon>Burkholderia cepacia complex</taxon>
    </lineage>
</organism>
<gene>
    <name evidence="1" type="primary">hisC1</name>
    <name type="ordered locus">Bcep18194_A3524</name>
</gene>
<proteinExistence type="inferred from homology"/>
<feature type="chain" id="PRO_0000230208" description="Histidinol-phosphate aminotransferase 1">
    <location>
        <begin position="1"/>
        <end position="357"/>
    </location>
</feature>
<feature type="modified residue" description="N6-(pyridoxal phosphate)lysine" evidence="1">
    <location>
        <position position="217"/>
    </location>
</feature>
<sequence length="357" mass="38404">MTTPQDIIRRDVLAMTSYPVPDASGFVKLDAMENPYPLPEPLAAALGERLAQVALNRYPAPRPAALLDKLRHAMGVPAGCEVLLGNGSDEIISMMSMACAKPGAKVLAPVPGFVMYELSAKLAQLEFVGVPLKADLTLDVDAMLAAIAEHRPAIVYLAYPNNPTGTLYDDADIERIVAAARHSLIVIDEAYQPFAVRSWLPRAAEFDNVVVMRTVSKLGLAGIRLGYLVGSPAWLTEFDKVRPPYNINVLTQATADFLLDHLDVLDAQAADLRAERTRLAQEVAALPGTTVFPSAGNFLLVRVPDAAAVFDALLTERVLVKNVSKMHPLLAECVRLTVGSPDENARLLAALKLALPG</sequence>
<protein>
    <recommendedName>
        <fullName evidence="1">Histidinol-phosphate aminotransferase 1</fullName>
        <ecNumber evidence="1">2.6.1.9</ecNumber>
    </recommendedName>
    <alternativeName>
        <fullName evidence="1">Imidazole acetol-phosphate transaminase 1</fullName>
    </alternativeName>
</protein>
<name>HIS81_BURL3</name>
<evidence type="ECO:0000255" key="1">
    <source>
        <dbReference type="HAMAP-Rule" id="MF_01023"/>
    </source>
</evidence>
<accession>Q39K90</accession>
<reference key="1">
    <citation type="submission" date="2005-10" db="EMBL/GenBank/DDBJ databases">
        <title>Complete sequence of chromosome 1 of Burkholderia sp. 383.</title>
        <authorList>
            <consortium name="US DOE Joint Genome Institute"/>
            <person name="Copeland A."/>
            <person name="Lucas S."/>
            <person name="Lapidus A."/>
            <person name="Barry K."/>
            <person name="Detter J.C."/>
            <person name="Glavina T."/>
            <person name="Hammon N."/>
            <person name="Israni S."/>
            <person name="Pitluck S."/>
            <person name="Chain P."/>
            <person name="Malfatti S."/>
            <person name="Shin M."/>
            <person name="Vergez L."/>
            <person name="Schmutz J."/>
            <person name="Larimer F."/>
            <person name="Land M."/>
            <person name="Kyrpides N."/>
            <person name="Lykidis A."/>
            <person name="Richardson P."/>
        </authorList>
    </citation>
    <scope>NUCLEOTIDE SEQUENCE [LARGE SCALE GENOMIC DNA]</scope>
    <source>
        <strain>ATCC 17760 / DSM 23089 / LMG 22485 / NCIMB 9086 / R18194 / 383</strain>
    </source>
</reference>
<dbReference type="EC" id="2.6.1.9" evidence="1"/>
<dbReference type="EMBL" id="CP000151">
    <property type="protein sequence ID" value="ABB07126.1"/>
    <property type="molecule type" value="Genomic_DNA"/>
</dbReference>
<dbReference type="RefSeq" id="WP_011350727.1">
    <property type="nucleotide sequence ID" value="NC_007510.1"/>
</dbReference>
<dbReference type="SMR" id="Q39K90"/>
<dbReference type="GeneID" id="45093439"/>
<dbReference type="KEGG" id="bur:Bcep18194_A3524"/>
<dbReference type="PATRIC" id="fig|482957.22.peg.369"/>
<dbReference type="HOGENOM" id="CLU_017584_3_1_4"/>
<dbReference type="UniPathway" id="UPA00031">
    <property type="reaction ID" value="UER00012"/>
</dbReference>
<dbReference type="Proteomes" id="UP000002705">
    <property type="component" value="Chromosome 1"/>
</dbReference>
<dbReference type="GO" id="GO:0004400">
    <property type="term" value="F:histidinol-phosphate transaminase activity"/>
    <property type="evidence" value="ECO:0007669"/>
    <property type="project" value="UniProtKB-UniRule"/>
</dbReference>
<dbReference type="GO" id="GO:0030170">
    <property type="term" value="F:pyridoxal phosphate binding"/>
    <property type="evidence" value="ECO:0007669"/>
    <property type="project" value="InterPro"/>
</dbReference>
<dbReference type="GO" id="GO:0000105">
    <property type="term" value="P:L-histidine biosynthetic process"/>
    <property type="evidence" value="ECO:0007669"/>
    <property type="project" value="UniProtKB-UniRule"/>
</dbReference>
<dbReference type="CDD" id="cd00609">
    <property type="entry name" value="AAT_like"/>
    <property type="match status" value="1"/>
</dbReference>
<dbReference type="Gene3D" id="3.90.1150.10">
    <property type="entry name" value="Aspartate Aminotransferase, domain 1"/>
    <property type="match status" value="1"/>
</dbReference>
<dbReference type="Gene3D" id="3.40.640.10">
    <property type="entry name" value="Type I PLP-dependent aspartate aminotransferase-like (Major domain)"/>
    <property type="match status" value="1"/>
</dbReference>
<dbReference type="HAMAP" id="MF_01023">
    <property type="entry name" value="HisC_aminotrans_2"/>
    <property type="match status" value="1"/>
</dbReference>
<dbReference type="InterPro" id="IPR004839">
    <property type="entry name" value="Aminotransferase_I/II_large"/>
</dbReference>
<dbReference type="InterPro" id="IPR005861">
    <property type="entry name" value="HisP_aminotrans"/>
</dbReference>
<dbReference type="InterPro" id="IPR050106">
    <property type="entry name" value="HistidinolP_aminotransfase"/>
</dbReference>
<dbReference type="InterPro" id="IPR015424">
    <property type="entry name" value="PyrdxlP-dep_Trfase"/>
</dbReference>
<dbReference type="InterPro" id="IPR015421">
    <property type="entry name" value="PyrdxlP-dep_Trfase_major"/>
</dbReference>
<dbReference type="InterPro" id="IPR015422">
    <property type="entry name" value="PyrdxlP-dep_Trfase_small"/>
</dbReference>
<dbReference type="NCBIfam" id="TIGR01141">
    <property type="entry name" value="hisC"/>
    <property type="match status" value="1"/>
</dbReference>
<dbReference type="PANTHER" id="PTHR43643:SF6">
    <property type="entry name" value="HISTIDINOL-PHOSPHATE AMINOTRANSFERASE"/>
    <property type="match status" value="1"/>
</dbReference>
<dbReference type="PANTHER" id="PTHR43643">
    <property type="entry name" value="HISTIDINOL-PHOSPHATE AMINOTRANSFERASE 2"/>
    <property type="match status" value="1"/>
</dbReference>
<dbReference type="Pfam" id="PF00155">
    <property type="entry name" value="Aminotran_1_2"/>
    <property type="match status" value="1"/>
</dbReference>
<dbReference type="SUPFAM" id="SSF53383">
    <property type="entry name" value="PLP-dependent transferases"/>
    <property type="match status" value="1"/>
</dbReference>
<keyword id="KW-0028">Amino-acid biosynthesis</keyword>
<keyword id="KW-0032">Aminotransferase</keyword>
<keyword id="KW-0368">Histidine biosynthesis</keyword>
<keyword id="KW-0663">Pyridoxal phosphate</keyword>
<keyword id="KW-0808">Transferase</keyword>
<comment type="catalytic activity">
    <reaction evidence="1">
        <text>L-histidinol phosphate + 2-oxoglutarate = 3-(imidazol-4-yl)-2-oxopropyl phosphate + L-glutamate</text>
        <dbReference type="Rhea" id="RHEA:23744"/>
        <dbReference type="ChEBI" id="CHEBI:16810"/>
        <dbReference type="ChEBI" id="CHEBI:29985"/>
        <dbReference type="ChEBI" id="CHEBI:57766"/>
        <dbReference type="ChEBI" id="CHEBI:57980"/>
        <dbReference type="EC" id="2.6.1.9"/>
    </reaction>
</comment>
<comment type="cofactor">
    <cofactor evidence="1">
        <name>pyridoxal 5'-phosphate</name>
        <dbReference type="ChEBI" id="CHEBI:597326"/>
    </cofactor>
</comment>
<comment type="pathway">
    <text evidence="1">Amino-acid biosynthesis; L-histidine biosynthesis; L-histidine from 5-phospho-alpha-D-ribose 1-diphosphate: step 7/9.</text>
</comment>
<comment type="subunit">
    <text evidence="1">Homodimer.</text>
</comment>
<comment type="similarity">
    <text evidence="1">Belongs to the class-II pyridoxal-phosphate-dependent aminotransferase family. Histidinol-phosphate aminotransferase subfamily.</text>
</comment>